<evidence type="ECO:0000255" key="1">
    <source>
        <dbReference type="PROSITE-ProRule" id="PRU00125"/>
    </source>
</evidence>
<evidence type="ECO:0000255" key="2">
    <source>
        <dbReference type="PROSITE-ProRule" id="PRU00172"/>
    </source>
</evidence>
<evidence type="ECO:0000256" key="3">
    <source>
        <dbReference type="SAM" id="MobiDB-lite"/>
    </source>
</evidence>
<evidence type="ECO:0000269" key="4">
    <source>
    </source>
</evidence>
<evidence type="ECO:0000269" key="5">
    <source>
    </source>
</evidence>
<evidence type="ECO:0000269" key="6">
    <source>
    </source>
</evidence>
<evidence type="ECO:0000305" key="7"/>
<evidence type="ECO:0007744" key="8">
    <source>
    </source>
</evidence>
<evidence type="ECO:0007744" key="9">
    <source>
    </source>
</evidence>
<name>LRG1_YEAST</name>
<dbReference type="EMBL" id="X78453">
    <property type="protein sequence ID" value="CAA55210.1"/>
    <property type="molecule type" value="Genomic_DNA"/>
</dbReference>
<dbReference type="EMBL" id="Z74288">
    <property type="protein sequence ID" value="CAA98820.1"/>
    <property type="molecule type" value="Genomic_DNA"/>
</dbReference>
<dbReference type="EMBL" id="BK006938">
    <property type="protein sequence ID" value="DAA11626.2"/>
    <property type="molecule type" value="Genomic_DNA"/>
</dbReference>
<dbReference type="PIR" id="S67804">
    <property type="entry name" value="S67804"/>
</dbReference>
<dbReference type="RefSeq" id="NP_010041.2">
    <property type="nucleotide sequence ID" value="NM_001180300.2"/>
</dbReference>
<dbReference type="SMR" id="P35688"/>
<dbReference type="BioGRID" id="31871">
    <property type="interactions" value="141"/>
</dbReference>
<dbReference type="DIP" id="DIP-2588N"/>
<dbReference type="FunCoup" id="P35688">
    <property type="interactions" value="35"/>
</dbReference>
<dbReference type="IntAct" id="P35688">
    <property type="interactions" value="6"/>
</dbReference>
<dbReference type="MINT" id="P35688"/>
<dbReference type="STRING" id="4932.YDL240W"/>
<dbReference type="iPTMnet" id="P35688"/>
<dbReference type="PaxDb" id="4932-YDL240W"/>
<dbReference type="PeptideAtlas" id="P35688"/>
<dbReference type="EnsemblFungi" id="YDL240W_mRNA">
    <property type="protein sequence ID" value="YDL240W"/>
    <property type="gene ID" value="YDL240W"/>
</dbReference>
<dbReference type="GeneID" id="851358"/>
<dbReference type="KEGG" id="sce:YDL240W"/>
<dbReference type="AGR" id="SGD:S000002399"/>
<dbReference type="SGD" id="S000002399">
    <property type="gene designation" value="LRG1"/>
</dbReference>
<dbReference type="VEuPathDB" id="FungiDB:YDL240W"/>
<dbReference type="eggNOG" id="KOG1703">
    <property type="taxonomic scope" value="Eukaryota"/>
</dbReference>
<dbReference type="eggNOG" id="KOG2710">
    <property type="taxonomic scope" value="Eukaryota"/>
</dbReference>
<dbReference type="HOGENOM" id="CLU_001321_1_0_1"/>
<dbReference type="InParanoid" id="P35688"/>
<dbReference type="OMA" id="WQMQSSV"/>
<dbReference type="OrthoDB" id="20689at2759"/>
<dbReference type="BioCyc" id="YEAST:G3O-29617-MONOMER"/>
<dbReference type="BioGRID-ORCS" id="851358">
    <property type="hits" value="2 hits in 10 CRISPR screens"/>
</dbReference>
<dbReference type="PRO" id="PR:P35688"/>
<dbReference type="Proteomes" id="UP000002311">
    <property type="component" value="Chromosome IV"/>
</dbReference>
<dbReference type="RNAct" id="P35688">
    <property type="molecule type" value="protein"/>
</dbReference>
<dbReference type="GO" id="GO:0005935">
    <property type="term" value="C:cellular bud neck"/>
    <property type="evidence" value="ECO:0000314"/>
    <property type="project" value="SGD"/>
</dbReference>
<dbReference type="GO" id="GO:0005934">
    <property type="term" value="C:cellular bud tip"/>
    <property type="evidence" value="ECO:0000314"/>
    <property type="project" value="SGD"/>
</dbReference>
<dbReference type="GO" id="GO:0005737">
    <property type="term" value="C:cytoplasm"/>
    <property type="evidence" value="ECO:0007005"/>
    <property type="project" value="SGD"/>
</dbReference>
<dbReference type="GO" id="GO:0000131">
    <property type="term" value="C:incipient cellular bud site"/>
    <property type="evidence" value="ECO:0000314"/>
    <property type="project" value="SGD"/>
</dbReference>
<dbReference type="GO" id="GO:0043332">
    <property type="term" value="C:mating projection tip"/>
    <property type="evidence" value="ECO:0000314"/>
    <property type="project" value="SGD"/>
</dbReference>
<dbReference type="GO" id="GO:0005739">
    <property type="term" value="C:mitochondrion"/>
    <property type="evidence" value="ECO:0007005"/>
    <property type="project" value="SGD"/>
</dbReference>
<dbReference type="GO" id="GO:0030427">
    <property type="term" value="C:site of polarized growth"/>
    <property type="evidence" value="ECO:0000314"/>
    <property type="project" value="SGD"/>
</dbReference>
<dbReference type="GO" id="GO:0005096">
    <property type="term" value="F:GTPase activator activity"/>
    <property type="evidence" value="ECO:0000314"/>
    <property type="project" value="SGD"/>
</dbReference>
<dbReference type="GO" id="GO:0046872">
    <property type="term" value="F:metal ion binding"/>
    <property type="evidence" value="ECO:0007669"/>
    <property type="project" value="UniProtKB-KW"/>
</dbReference>
<dbReference type="GO" id="GO:0030036">
    <property type="term" value="P:actin cytoskeleton organization"/>
    <property type="evidence" value="ECO:0000318"/>
    <property type="project" value="GO_Central"/>
</dbReference>
<dbReference type="GO" id="GO:0000755">
    <property type="term" value="P:cytogamy"/>
    <property type="evidence" value="ECO:0000315"/>
    <property type="project" value="SGD"/>
</dbReference>
<dbReference type="GO" id="GO:0035024">
    <property type="term" value="P:negative regulation of Rho protein signal transduction"/>
    <property type="evidence" value="ECO:0000315"/>
    <property type="project" value="SGD"/>
</dbReference>
<dbReference type="GO" id="GO:0090334">
    <property type="term" value="P:regulation of cell wall (1-&gt;3)-beta-D-glucan biosynthetic process"/>
    <property type="evidence" value="ECO:0000316"/>
    <property type="project" value="SGD"/>
</dbReference>
<dbReference type="GO" id="GO:0060237">
    <property type="term" value="P:regulation of fungal-type cell wall organization"/>
    <property type="evidence" value="ECO:0000315"/>
    <property type="project" value="SGD"/>
</dbReference>
<dbReference type="GO" id="GO:0007165">
    <property type="term" value="P:signal transduction"/>
    <property type="evidence" value="ECO:0007669"/>
    <property type="project" value="InterPro"/>
</dbReference>
<dbReference type="GO" id="GO:0030435">
    <property type="term" value="P:sporulation resulting in formation of a cellular spore"/>
    <property type="evidence" value="ECO:0007669"/>
    <property type="project" value="UniProtKB-KW"/>
</dbReference>
<dbReference type="CDD" id="cd08368">
    <property type="entry name" value="LIM"/>
    <property type="match status" value="1"/>
</dbReference>
<dbReference type="CDD" id="cd09391">
    <property type="entry name" value="LIM1_Lrg1p_like"/>
    <property type="match status" value="1"/>
</dbReference>
<dbReference type="CDD" id="cd09393">
    <property type="entry name" value="LIM3_Lrg1p_like"/>
    <property type="match status" value="1"/>
</dbReference>
<dbReference type="CDD" id="cd04397">
    <property type="entry name" value="RhoGAP_fLRG1"/>
    <property type="match status" value="1"/>
</dbReference>
<dbReference type="FunFam" id="1.10.555.10:FF:000063">
    <property type="entry name" value="Lrg1p"/>
    <property type="match status" value="1"/>
</dbReference>
<dbReference type="FunFam" id="2.10.110.10:FF:000134">
    <property type="entry name" value="Lrg1p"/>
    <property type="match status" value="1"/>
</dbReference>
<dbReference type="FunFam" id="2.10.110.10:FF:000142">
    <property type="entry name" value="Lrg1p"/>
    <property type="match status" value="1"/>
</dbReference>
<dbReference type="FunFam" id="2.10.110.10:FF:000159">
    <property type="entry name" value="Lrg1p"/>
    <property type="match status" value="1"/>
</dbReference>
<dbReference type="Gene3D" id="2.10.110.10">
    <property type="entry name" value="Cysteine Rich Protein"/>
    <property type="match status" value="3"/>
</dbReference>
<dbReference type="Gene3D" id="1.10.555.10">
    <property type="entry name" value="Rho GTPase activation protein"/>
    <property type="match status" value="1"/>
</dbReference>
<dbReference type="InterPro" id="IPR008936">
    <property type="entry name" value="Rho_GTPase_activation_prot"/>
</dbReference>
<dbReference type="InterPro" id="IPR000198">
    <property type="entry name" value="RhoGAP_dom"/>
</dbReference>
<dbReference type="InterPro" id="IPR001781">
    <property type="entry name" value="Znf_LIM"/>
</dbReference>
<dbReference type="PANTHER" id="PTHR14963">
    <property type="entry name" value="RHO GTPASE ACTIVATING PROTEIN 18,19-RELATED"/>
    <property type="match status" value="1"/>
</dbReference>
<dbReference type="PANTHER" id="PTHR14963:SF7">
    <property type="entry name" value="RHO GTPASE-ACTIVATING PROTEIN 19"/>
    <property type="match status" value="1"/>
</dbReference>
<dbReference type="Pfam" id="PF00412">
    <property type="entry name" value="LIM"/>
    <property type="match status" value="2"/>
</dbReference>
<dbReference type="Pfam" id="PF00620">
    <property type="entry name" value="RhoGAP"/>
    <property type="match status" value="1"/>
</dbReference>
<dbReference type="SMART" id="SM00132">
    <property type="entry name" value="LIM"/>
    <property type="match status" value="3"/>
</dbReference>
<dbReference type="SMART" id="SM00324">
    <property type="entry name" value="RhoGAP"/>
    <property type="match status" value="1"/>
</dbReference>
<dbReference type="SUPFAM" id="SSF57716">
    <property type="entry name" value="Glucocorticoid receptor-like (DNA-binding domain)"/>
    <property type="match status" value="2"/>
</dbReference>
<dbReference type="SUPFAM" id="SSF48350">
    <property type="entry name" value="GTPase activation domain, GAP"/>
    <property type="match status" value="1"/>
</dbReference>
<dbReference type="PROSITE" id="PS00478">
    <property type="entry name" value="LIM_DOMAIN_1"/>
    <property type="match status" value="2"/>
</dbReference>
<dbReference type="PROSITE" id="PS50023">
    <property type="entry name" value="LIM_DOMAIN_2"/>
    <property type="match status" value="3"/>
</dbReference>
<dbReference type="PROSITE" id="PS50238">
    <property type="entry name" value="RHOGAP"/>
    <property type="match status" value="1"/>
</dbReference>
<keyword id="KW-0007">Acetylation</keyword>
<keyword id="KW-0963">Cytoplasm</keyword>
<keyword id="KW-0343">GTPase activation</keyword>
<keyword id="KW-0440">LIM domain</keyword>
<keyword id="KW-0479">Metal-binding</keyword>
<keyword id="KW-0597">Phosphoprotein</keyword>
<keyword id="KW-1185">Reference proteome</keyword>
<keyword id="KW-0677">Repeat</keyword>
<keyword id="KW-0749">Sporulation</keyword>
<keyword id="KW-0862">Zinc</keyword>
<organism>
    <name type="scientific">Saccharomyces cerevisiae (strain ATCC 204508 / S288c)</name>
    <name type="common">Baker's yeast</name>
    <dbReference type="NCBI Taxonomy" id="559292"/>
    <lineage>
        <taxon>Eukaryota</taxon>
        <taxon>Fungi</taxon>
        <taxon>Dikarya</taxon>
        <taxon>Ascomycota</taxon>
        <taxon>Saccharomycotina</taxon>
        <taxon>Saccharomycetes</taxon>
        <taxon>Saccharomycetales</taxon>
        <taxon>Saccharomycetaceae</taxon>
        <taxon>Saccharomyces</taxon>
    </lineage>
</organism>
<accession>P35688</accession>
<accession>D6VRB6</accession>
<accession>Q07735</accession>
<reference key="1">
    <citation type="journal article" date="1994" name="Nucleic Acids Res.">
        <title>LRG1 is expressed during sporulation in Saccharomyces cerevisiae and contains motifs similar to LIM and rho/racGAP domains.</title>
        <authorList>
            <person name="Mueller A."/>
            <person name="Xu G."/>
            <person name="Wells R."/>
            <person name="Hollenberg C.P."/>
            <person name="Piepersberg W."/>
        </authorList>
    </citation>
    <scope>NUCLEOTIDE SEQUENCE [GENOMIC DNA]</scope>
    <source>
        <strain>DBY874</strain>
    </source>
</reference>
<reference key="2">
    <citation type="journal article" date="1997" name="Nature">
        <title>The nucleotide sequence of Saccharomyces cerevisiae chromosome IV.</title>
        <authorList>
            <person name="Jacq C."/>
            <person name="Alt-Moerbe J."/>
            <person name="Andre B."/>
            <person name="Arnold W."/>
            <person name="Bahr A."/>
            <person name="Ballesta J.P.G."/>
            <person name="Bargues M."/>
            <person name="Baron L."/>
            <person name="Becker A."/>
            <person name="Biteau N."/>
            <person name="Bloecker H."/>
            <person name="Blugeon C."/>
            <person name="Boskovic J."/>
            <person name="Brandt P."/>
            <person name="Brueckner M."/>
            <person name="Buitrago M.J."/>
            <person name="Coster F."/>
            <person name="Delaveau T."/>
            <person name="del Rey F."/>
            <person name="Dujon B."/>
            <person name="Eide L.G."/>
            <person name="Garcia-Cantalejo J.M."/>
            <person name="Goffeau A."/>
            <person name="Gomez-Peris A."/>
            <person name="Granotier C."/>
            <person name="Hanemann V."/>
            <person name="Hankeln T."/>
            <person name="Hoheisel J.D."/>
            <person name="Jaeger W."/>
            <person name="Jimenez A."/>
            <person name="Jonniaux J.-L."/>
            <person name="Kraemer C."/>
            <person name="Kuester H."/>
            <person name="Laamanen P."/>
            <person name="Legros Y."/>
            <person name="Louis E.J."/>
            <person name="Moeller-Rieker S."/>
            <person name="Monnet A."/>
            <person name="Moro M."/>
            <person name="Mueller-Auer S."/>
            <person name="Nussbaumer B."/>
            <person name="Paricio N."/>
            <person name="Paulin L."/>
            <person name="Perea J."/>
            <person name="Perez-Alonso M."/>
            <person name="Perez-Ortin J.E."/>
            <person name="Pohl T.M."/>
            <person name="Prydz H."/>
            <person name="Purnelle B."/>
            <person name="Rasmussen S.W."/>
            <person name="Remacha M.A."/>
            <person name="Revuelta J.L."/>
            <person name="Rieger M."/>
            <person name="Salom D."/>
            <person name="Saluz H.P."/>
            <person name="Saiz J.E."/>
            <person name="Saren A.-M."/>
            <person name="Schaefer M."/>
            <person name="Scharfe M."/>
            <person name="Schmidt E.R."/>
            <person name="Schneider C."/>
            <person name="Scholler P."/>
            <person name="Schwarz S."/>
            <person name="Soler-Mira A."/>
            <person name="Urrestarazu L.A."/>
            <person name="Verhasselt P."/>
            <person name="Vissers S."/>
            <person name="Voet M."/>
            <person name="Volckaert G."/>
            <person name="Wagner G."/>
            <person name="Wambutt R."/>
            <person name="Wedler E."/>
            <person name="Wedler H."/>
            <person name="Woelfl S."/>
            <person name="Harris D.E."/>
            <person name="Bowman S."/>
            <person name="Brown D."/>
            <person name="Churcher C.M."/>
            <person name="Connor R."/>
            <person name="Dedman K."/>
            <person name="Gentles S."/>
            <person name="Hamlin N."/>
            <person name="Hunt S."/>
            <person name="Jones L."/>
            <person name="McDonald S."/>
            <person name="Murphy L.D."/>
            <person name="Niblett D."/>
            <person name="Odell C."/>
            <person name="Oliver K."/>
            <person name="Rajandream M.A."/>
            <person name="Richards C."/>
            <person name="Shore L."/>
            <person name="Walsh S.V."/>
            <person name="Barrell B.G."/>
            <person name="Dietrich F.S."/>
            <person name="Mulligan J.T."/>
            <person name="Allen E."/>
            <person name="Araujo R."/>
            <person name="Aviles E."/>
            <person name="Berno A."/>
            <person name="Carpenter J."/>
            <person name="Chen E."/>
            <person name="Cherry J.M."/>
            <person name="Chung E."/>
            <person name="Duncan M."/>
            <person name="Hunicke-Smith S."/>
            <person name="Hyman R.W."/>
            <person name="Komp C."/>
            <person name="Lashkari D."/>
            <person name="Lew H."/>
            <person name="Lin D."/>
            <person name="Mosedale D."/>
            <person name="Nakahara K."/>
            <person name="Namath A."/>
            <person name="Oefner P."/>
            <person name="Oh C."/>
            <person name="Petel F.X."/>
            <person name="Roberts D."/>
            <person name="Schramm S."/>
            <person name="Schroeder M."/>
            <person name="Shogren T."/>
            <person name="Shroff N."/>
            <person name="Winant A."/>
            <person name="Yelton M.A."/>
            <person name="Botstein D."/>
            <person name="Davis R.W."/>
            <person name="Johnston M."/>
            <person name="Andrews S."/>
            <person name="Brinkman R."/>
            <person name="Cooper J."/>
            <person name="Ding H."/>
            <person name="Du Z."/>
            <person name="Favello A."/>
            <person name="Fulton L."/>
            <person name="Gattung S."/>
            <person name="Greco T."/>
            <person name="Hallsworth K."/>
            <person name="Hawkins J."/>
            <person name="Hillier L.W."/>
            <person name="Jier M."/>
            <person name="Johnson D."/>
            <person name="Johnston L."/>
            <person name="Kirsten J."/>
            <person name="Kucaba T."/>
            <person name="Langston Y."/>
            <person name="Latreille P."/>
            <person name="Le T."/>
            <person name="Mardis E."/>
            <person name="Menezes S."/>
            <person name="Miller N."/>
            <person name="Nhan M."/>
            <person name="Pauley A."/>
            <person name="Peluso D."/>
            <person name="Rifkin L."/>
            <person name="Riles L."/>
            <person name="Taich A."/>
            <person name="Trevaskis E."/>
            <person name="Vignati D."/>
            <person name="Wilcox L."/>
            <person name="Wohldman P."/>
            <person name="Vaudin M."/>
            <person name="Wilson R."/>
            <person name="Waterston R."/>
            <person name="Albermann K."/>
            <person name="Hani J."/>
            <person name="Heumann K."/>
            <person name="Kleine K."/>
            <person name="Mewes H.-W."/>
            <person name="Zollner A."/>
            <person name="Zaccaria P."/>
        </authorList>
    </citation>
    <scope>NUCLEOTIDE SEQUENCE [LARGE SCALE GENOMIC DNA]</scope>
    <source>
        <strain>ATCC 204508 / S288c</strain>
    </source>
</reference>
<reference key="3">
    <citation type="journal article" date="2014" name="G3 (Bethesda)">
        <title>The reference genome sequence of Saccharomyces cerevisiae: Then and now.</title>
        <authorList>
            <person name="Engel S.R."/>
            <person name="Dietrich F.S."/>
            <person name="Fisk D.G."/>
            <person name="Binkley G."/>
            <person name="Balakrishnan R."/>
            <person name="Costanzo M.C."/>
            <person name="Dwight S.S."/>
            <person name="Hitz B.C."/>
            <person name="Karra K."/>
            <person name="Nash R.S."/>
            <person name="Weng S."/>
            <person name="Wong E.D."/>
            <person name="Lloyd P."/>
            <person name="Skrzypek M.S."/>
            <person name="Miyasato S.R."/>
            <person name="Simison M."/>
            <person name="Cherry J.M."/>
        </authorList>
    </citation>
    <scope>GENOME REANNOTATION</scope>
    <scope>SEQUENCE REVISION TO 531</scope>
    <source>
        <strain>ATCC 204508 / S288c</strain>
    </source>
</reference>
<reference key="4">
    <citation type="journal article" date="2001" name="FEBS Lett.">
        <title>Functional characterization of the Bag7, Lrg1 and Rgd2 RhoGAP proteins from Saccharomyces cerevisiae.</title>
        <authorList>
            <person name="Roumanie O."/>
            <person name="Weinachter C."/>
            <person name="Larrieu I."/>
            <person name="Crouzet M."/>
            <person name="Doignon F."/>
        </authorList>
    </citation>
    <scope>FUNCTION</scope>
    <scope>INTERACTION WITH CDC42; RHO1 AND RHO2</scope>
</reference>
<reference key="5">
    <citation type="journal article" date="2001" name="Yeast">
        <title>Yeast Lrg1p acts as a specialized RhoGAP regulating 1,3-beta-glucan synthesis.</title>
        <authorList>
            <person name="Watanabe D."/>
            <person name="Abe M."/>
            <person name="Ohya Y."/>
        </authorList>
    </citation>
    <scope>FUNCTION</scope>
    <scope>INTERACTION WITH RHO1</scope>
    <scope>SUBCELLULAR LOCATION</scope>
</reference>
<reference key="6">
    <citation type="journal article" date="2003" name="Nature">
        <title>Global analysis of protein localization in budding yeast.</title>
        <authorList>
            <person name="Huh W.-K."/>
            <person name="Falvo J.V."/>
            <person name="Gerke L.C."/>
            <person name="Carroll A.S."/>
            <person name="Howson R.W."/>
            <person name="Weissman J.S."/>
            <person name="O'Shea E.K."/>
        </authorList>
    </citation>
    <scope>SUBCELLULAR LOCATION [LARGE SCALE ANALYSIS]</scope>
</reference>
<reference key="7">
    <citation type="journal article" date="2003" name="Nature">
        <title>Global analysis of protein expression in yeast.</title>
        <authorList>
            <person name="Ghaemmaghami S."/>
            <person name="Huh W.-K."/>
            <person name="Bower K."/>
            <person name="Howson R.W."/>
            <person name="Belle A."/>
            <person name="Dephoure N."/>
            <person name="O'Shea E.K."/>
            <person name="Weissman J.S."/>
        </authorList>
    </citation>
    <scope>LEVEL OF PROTEIN EXPRESSION [LARGE SCALE ANALYSIS]</scope>
</reference>
<reference key="8">
    <citation type="journal article" date="2009" name="Science">
        <title>Global analysis of Cdk1 substrate phosphorylation sites provides insights into evolution.</title>
        <authorList>
            <person name="Holt L.J."/>
            <person name="Tuch B.B."/>
            <person name="Villen J."/>
            <person name="Johnson A.D."/>
            <person name="Gygi S.P."/>
            <person name="Morgan D.O."/>
        </authorList>
    </citation>
    <scope>PHOSPHORYLATION [LARGE SCALE ANALYSIS] AT SER-562</scope>
    <scope>IDENTIFICATION BY MASS SPECTROMETRY [LARGE SCALE ANALYSIS]</scope>
</reference>
<reference key="9">
    <citation type="journal article" date="2012" name="Proc. Natl. Acad. Sci. U.S.A.">
        <title>N-terminal acetylome analyses and functional insights of the N-terminal acetyltransferase NatB.</title>
        <authorList>
            <person name="Van Damme P."/>
            <person name="Lasa M."/>
            <person name="Polevoda B."/>
            <person name="Gazquez C."/>
            <person name="Elosegui-Artola A."/>
            <person name="Kim D.S."/>
            <person name="De Juan-Pardo E."/>
            <person name="Demeyer K."/>
            <person name="Hole K."/>
            <person name="Larrea E."/>
            <person name="Timmerman E."/>
            <person name="Prieto J."/>
            <person name="Arnesen T."/>
            <person name="Sherman F."/>
            <person name="Gevaert K."/>
            <person name="Aldabe R."/>
        </authorList>
    </citation>
    <scope>ACETYLATION [LARGE SCALE ANALYSIS] AT MET-1</scope>
    <scope>IDENTIFICATION BY MASS SPECTROMETRY [LARGE SCALE ANALYSIS]</scope>
</reference>
<proteinExistence type="evidence at protein level"/>
<feature type="chain" id="PRO_0000075838" description="Rho-GTPase-activating protein LRG1">
    <location>
        <begin position="1"/>
        <end position="1017"/>
    </location>
</feature>
<feature type="domain" description="LIM zinc-binding 1" evidence="1">
    <location>
        <begin position="28"/>
        <end position="88"/>
    </location>
</feature>
<feature type="domain" description="LIM zinc-binding 2" evidence="1">
    <location>
        <begin position="98"/>
        <end position="148"/>
    </location>
</feature>
<feature type="domain" description="LIM zinc-binding 3; truncated" evidence="1">
    <location>
        <begin position="155"/>
        <end position="184"/>
    </location>
</feature>
<feature type="domain" description="LIM zinc-binding 4" evidence="1">
    <location>
        <begin position="419"/>
        <end position="474"/>
    </location>
</feature>
<feature type="domain" description="Rho-GAP" evidence="2">
    <location>
        <begin position="730"/>
        <end position="953"/>
    </location>
</feature>
<feature type="region of interest" description="Disordered" evidence="3">
    <location>
        <begin position="570"/>
        <end position="602"/>
    </location>
</feature>
<feature type="compositionally biased region" description="Polar residues" evidence="3">
    <location>
        <begin position="584"/>
        <end position="602"/>
    </location>
</feature>
<feature type="site" description="Arginine finger; crucial for GTP hydrolysis by stabilizing the transition state" evidence="2">
    <location>
        <position position="777"/>
    </location>
</feature>
<feature type="modified residue" description="N-acetylmethionine" evidence="9">
    <location>
        <position position="1"/>
    </location>
</feature>
<feature type="modified residue" description="Phosphoserine" evidence="8">
    <location>
        <position position="562"/>
    </location>
</feature>
<feature type="sequence conflict" description="In Ref. 2; CAA98820." evidence="7" ref="2">
    <original>Q</original>
    <variation>H</variation>
    <location>
        <position position="531"/>
    </location>
</feature>
<feature type="sequence conflict" description="In Ref. 1; CAA55210." evidence="7" ref="1">
    <original>R</original>
    <variation>S</variation>
    <location>
        <position position="766"/>
    </location>
</feature>
<feature type="sequence conflict" description="In Ref. 1; CAA55210." evidence="7" ref="1">
    <original>N</original>
    <variation>T</variation>
    <location>
        <position position="791"/>
    </location>
</feature>
<feature type="sequence conflict" description="In Ref. 1; CAA55210." evidence="7" ref="1">
    <original>L</original>
    <variation>Q</variation>
    <location>
        <position position="821"/>
    </location>
</feature>
<feature type="sequence conflict" description="In Ref. 1; CAA55210." evidence="7" ref="1">
    <original>A</original>
    <variation>S</variation>
    <location>
        <position position="838"/>
    </location>
</feature>
<feature type="sequence conflict" description="In Ref. 1; CAA55210." evidence="7" ref="1">
    <original>V</original>
    <variation>L</variation>
    <location>
        <position position="849"/>
    </location>
</feature>
<feature type="sequence conflict" description="In Ref. 1; CAA55210." evidence="7" ref="1">
    <original>S</original>
    <variation>F</variation>
    <location>
        <position position="895"/>
    </location>
</feature>
<feature type="sequence conflict" description="In Ref. 1; CAA55210." evidence="7" ref="1">
    <original>A</original>
    <variation>T</variation>
    <location>
        <position position="928"/>
    </location>
</feature>
<feature type="sequence conflict" description="In Ref. 1; CAA55210." evidence="7" ref="1">
    <original>Y</original>
    <variation>S</variation>
    <location>
        <position position="935"/>
    </location>
</feature>
<feature type="sequence conflict" description="In Ref. 1; CAA55210." evidence="7" ref="1">
    <original>INHFISTVMQSKTIDYSECDIKTPVTVKDSTTTVIQGEINK</original>
    <variation>TILFPPLCKVKQSIIPNVT</variation>
    <location>
        <begin position="977"/>
        <end position="1017"/>
    </location>
</feature>
<protein>
    <recommendedName>
        <fullName>Rho-GTPase-activating protein LRG1</fullName>
    </recommendedName>
    <alternativeName>
        <fullName>LIM-RhoGAP protein 1</fullName>
    </alternativeName>
</protein>
<gene>
    <name type="primary">LRG1</name>
    <name type="ordered locus">YDL240W</name>
</gene>
<sequence>MIQNSAGYRSLNTASPMTVQVKNQKKICARCNKLVIPDSQRTKTTLKALGKYYHESCFTCQDCQKPLKPKYFPYQVDKTSESILLCQYDYFRRHNLLCHVCDTPLRGLYYTAFGYRYDEEHFSCTICATPCGVKKCFMYGNQLYCKYHFLKYFSKRCKGCEFPISDQYIEFPKGEEIHCWHPECYGIHKYWHVNLAAETVGLQYLPKLEYNPNSGDKDINPTAYELDKQMQAFNFILSKTWSVLYRFEEEAASCISDMFQYLTSNDQLKGIESTGLLVLKIDCLFRGLDTLNLSTNKSMPVNSDQECIENNAMAASKYSKFPKNLSTKIMIYLQLLRKLGTENKNETITISSFMSVITGLAHFLKLLTRFGLYTALENNKLTHSVNPLLRFLREVEKNELFENNPFQYIKTPVNATDSCAGCNKYIQEECIQFYEHRWHIACFTCSSCHKNINPRSLTDPTFNKEKKKILCSHCSIDDPASVPGFKFVTKLAQLIFLLKIALVKSRTVMLKSKASNKVGRNSLQSTMLKEQTYIRTLNDIKRLRSRRESVRVTHNKQQARKSVILETAETDLNDPTKQGDSKNLVIQTDDPSSSQQVSTRENVFSNTKTLTLDDISRIVAAEQARELRPNAFAHFKKLKETDDETSNVVPKKSGVYYSELSTMELSMIRAISLSLLAGKQLISKTDPNYTSLVSMVFSNEKQVTGSFWNRMKIMMSMEPKKPITKTVFGAPLDVLCEKWGVDSDLGVGPVKIRIPIIIDELISSLRQMDMSVEGIFRKNGNIRRLRELTANIDSNPTEAPDFSKENAIQLSALLKKFIRELPQPILSTDLYELWIKAAKIDLEDEKQRVILLIYSLLPTYNRNLLEALLSFLHWTSSFSYIENEMGSKMDIHNLSTVITPNILYLRHKEISNDNVPDEPESGLVDSFAQNKGENYFLAIEIVDYLITHNEEMAMVPKFLMNLLKDVQLQKLDNYESINHFISTVMQSKTIDYSECDIKTPVTVKDSTTTVIQGEINK</sequence>
<comment type="function">
    <text evidence="4 5">Acts in signal transduction. Activates CDC42, RHO1 and RHO2. Negatively regulates 1,3-beta-glucan synthesis. May be responsible for the down-regulation of CDC42 during mating.</text>
</comment>
<comment type="subunit">
    <text evidence="4 5">Interacts with CDC42, RHO1 and RHO2.</text>
</comment>
<comment type="subcellular location">
    <subcellularLocation>
        <location>Cytoplasm</location>
    </subcellularLocation>
    <subcellularLocation>
        <location>Bud</location>
    </subcellularLocation>
    <subcellularLocation>
        <location>Bud neck</location>
    </subcellularLocation>
    <text>Localized to the bud site during bud formation and at the bud neck during cytokinesis.</text>
</comment>
<comment type="developmental stage">
    <text>Highly expressed during sporulation.</text>
</comment>
<comment type="miscellaneous">
    <text evidence="6">Present with 468 molecules/cell in log phase SD medium.</text>
</comment>